<feature type="signal peptide" evidence="1">
    <location>
        <begin position="1"/>
        <end position="21"/>
    </location>
</feature>
<feature type="chain" id="PRO_0000021758" description="Accessory gland-specific peptide 26Ab">
    <location>
        <begin position="22"/>
        <end position="90"/>
    </location>
</feature>
<sequence length="90" mass="10255">MNYFAVLCIFSCICLWQFSDAAPFISVQSSSQSRSQKVMNGMLRTLYDYSVQDSVNDATGHLIHTHKADFNSDVMSPEEIERVRQQLNMA</sequence>
<keyword id="KW-0085">Behavior</keyword>
<keyword id="KW-0964">Secreted</keyword>
<keyword id="KW-0732">Signal</keyword>
<dbReference type="EMBL" id="X70898">
    <property type="protein sequence ID" value="CAA50253.1"/>
    <property type="molecule type" value="Genomic_DNA"/>
</dbReference>
<dbReference type="PIR" id="S30428">
    <property type="entry name" value="S30428"/>
</dbReference>
<dbReference type="Proteomes" id="UP000515162">
    <property type="component" value="Unplaced"/>
</dbReference>
<dbReference type="GO" id="GO:0005576">
    <property type="term" value="C:extracellular region"/>
    <property type="evidence" value="ECO:0007669"/>
    <property type="project" value="UniProtKB-SubCell"/>
</dbReference>
<dbReference type="GO" id="GO:0007617">
    <property type="term" value="P:mating behavior"/>
    <property type="evidence" value="ECO:0007669"/>
    <property type="project" value="InterPro"/>
</dbReference>
<dbReference type="InterPro" id="IPR008392">
    <property type="entry name" value="Acp26Ab"/>
</dbReference>
<dbReference type="Pfam" id="PF05777">
    <property type="entry name" value="Acp26Ab"/>
    <property type="match status" value="1"/>
</dbReference>
<reference key="1">
    <citation type="journal article" date="1992" name="Genetics">
        <title>Polymorphism and divergence in the Mst26A male accessory gland gene region in Drosophila.</title>
        <authorList>
            <person name="Aguade M."/>
            <person name="Miyashita N."/>
            <person name="Langley C.H."/>
        </authorList>
    </citation>
    <scope>NUCLEOTIDE SEQUENCE [GENOMIC DNA]</scope>
    <source>
        <strain>Robertson C340</strain>
    </source>
</reference>
<name>MS2B_DROMA</name>
<comment type="function">
    <text>This protein is transferred from male to female during mating and may affect egglaying and behavior after mating.</text>
</comment>
<comment type="subcellular location">
    <subcellularLocation>
        <location>Secreted</location>
        <location>Extracellular space</location>
    </subcellularLocation>
</comment>
<comment type="tissue specificity">
    <text>Main cells of the accessory glands of males.</text>
</comment>
<evidence type="ECO:0000255" key="1"/>
<protein>
    <recommendedName>
        <fullName>Accessory gland-specific peptide 26Ab</fullName>
    </recommendedName>
    <alternativeName>
        <fullName>Male accessory gland secretory protein 355B</fullName>
    </alternativeName>
</protein>
<proteinExistence type="evidence at transcript level"/>
<organism>
    <name type="scientific">Drosophila mauritiana</name>
    <name type="common">Fruit fly</name>
    <dbReference type="NCBI Taxonomy" id="7226"/>
    <lineage>
        <taxon>Eukaryota</taxon>
        <taxon>Metazoa</taxon>
        <taxon>Ecdysozoa</taxon>
        <taxon>Arthropoda</taxon>
        <taxon>Hexapoda</taxon>
        <taxon>Insecta</taxon>
        <taxon>Pterygota</taxon>
        <taxon>Neoptera</taxon>
        <taxon>Endopterygota</taxon>
        <taxon>Diptera</taxon>
        <taxon>Brachycera</taxon>
        <taxon>Muscomorpha</taxon>
        <taxon>Ephydroidea</taxon>
        <taxon>Drosophilidae</taxon>
        <taxon>Drosophila</taxon>
        <taxon>Sophophora</taxon>
    </lineage>
</organism>
<accession>P33738</accession>
<gene>
    <name type="primary">Acp26Ab</name>
    <name type="synonym">Mst26Ab</name>
    <name type="synonym">mst355B</name>
</gene>